<accession>B0EN90</accession>
<keyword id="KW-0227">DNA damage</keyword>
<keyword id="KW-0234">DNA repair</keyword>
<keyword id="KW-0235">DNA replication</keyword>
<keyword id="KW-0255">Endonuclease</keyword>
<keyword id="KW-0269">Exonuclease</keyword>
<keyword id="KW-0378">Hydrolase</keyword>
<keyword id="KW-0460">Magnesium</keyword>
<keyword id="KW-0479">Metal-binding</keyword>
<keyword id="KW-0496">Mitochondrion</keyword>
<keyword id="KW-0540">Nuclease</keyword>
<keyword id="KW-0539">Nucleus</keyword>
<keyword id="KW-0597">Phosphoprotein</keyword>
<sequence length="376" mass="42484">MGIKGLSKLLARYAPKSMKEGKIDQYSGRVIAIDASILVYQFISAVRDTTGATMVDEFGETTSHIIGTFYRTIKLIESGIKPVYVFDGKPPEMKDGELNKRKENAQKAQEQLDKALEEGDKEQAKKLMKRTARMTKEQSDEVKKLLQLMGIPCVEANCEAEGTCAALVKAGKCYATATEDMDALTLGSEYVVRKFSASDNKKEPIREYSLSSILEETGFSMEQFIDLCILLGCDYCDTIKGVGPITAFELIQQYKSIENVLKHLSDKYKVPENWKYKEARELFLHPDVADFSDYKLEWNKLDEEGIKQYLVTEKHFNEERVTKGIEKLKNVKSKKAQGRLDSFFSVKKVPLSKSEAASGVKRKKPTTKAKESRKKK</sequence>
<dbReference type="EC" id="3.1.-.-" evidence="1"/>
<dbReference type="EMBL" id="DS550066">
    <property type="protein sequence ID" value="EDR24004.1"/>
    <property type="molecule type" value="Genomic_DNA"/>
</dbReference>
<dbReference type="RefSeq" id="XP_001739610.1">
    <property type="nucleotide sequence ID" value="XM_001739558.1"/>
</dbReference>
<dbReference type="SMR" id="B0EN90"/>
<dbReference type="EnsemblProtists" id="EDR24004">
    <property type="protein sequence ID" value="EDR24004"/>
    <property type="gene ID" value="EDI_115410"/>
</dbReference>
<dbReference type="GeneID" id="5884751"/>
<dbReference type="KEGG" id="edi:EDI_115410"/>
<dbReference type="VEuPathDB" id="AmoebaDB:EDI_115410"/>
<dbReference type="eggNOG" id="KOG2519">
    <property type="taxonomic scope" value="Eukaryota"/>
</dbReference>
<dbReference type="OMA" id="MGIPWVQ"/>
<dbReference type="OrthoDB" id="1937206at2759"/>
<dbReference type="Proteomes" id="UP000008076">
    <property type="component" value="Unassembled WGS sequence"/>
</dbReference>
<dbReference type="GO" id="GO:0005739">
    <property type="term" value="C:mitochondrion"/>
    <property type="evidence" value="ECO:0007669"/>
    <property type="project" value="UniProtKB-SubCell"/>
</dbReference>
<dbReference type="GO" id="GO:0005730">
    <property type="term" value="C:nucleolus"/>
    <property type="evidence" value="ECO:0007669"/>
    <property type="project" value="UniProtKB-SubCell"/>
</dbReference>
<dbReference type="GO" id="GO:0005654">
    <property type="term" value="C:nucleoplasm"/>
    <property type="evidence" value="ECO:0007669"/>
    <property type="project" value="UniProtKB-SubCell"/>
</dbReference>
<dbReference type="GO" id="GO:0008409">
    <property type="term" value="F:5'-3' exonuclease activity"/>
    <property type="evidence" value="ECO:0007669"/>
    <property type="project" value="UniProtKB-UniRule"/>
</dbReference>
<dbReference type="GO" id="GO:0017108">
    <property type="term" value="F:5'-flap endonuclease activity"/>
    <property type="evidence" value="ECO:0007669"/>
    <property type="project" value="UniProtKB-UniRule"/>
</dbReference>
<dbReference type="GO" id="GO:0003677">
    <property type="term" value="F:DNA binding"/>
    <property type="evidence" value="ECO:0007669"/>
    <property type="project" value="UniProtKB-UniRule"/>
</dbReference>
<dbReference type="GO" id="GO:0000287">
    <property type="term" value="F:magnesium ion binding"/>
    <property type="evidence" value="ECO:0007669"/>
    <property type="project" value="UniProtKB-UniRule"/>
</dbReference>
<dbReference type="GO" id="GO:0006284">
    <property type="term" value="P:base-excision repair"/>
    <property type="evidence" value="ECO:0007669"/>
    <property type="project" value="UniProtKB-UniRule"/>
</dbReference>
<dbReference type="GO" id="GO:0043137">
    <property type="term" value="P:DNA replication, removal of RNA primer"/>
    <property type="evidence" value="ECO:0007669"/>
    <property type="project" value="UniProtKB-UniRule"/>
</dbReference>
<dbReference type="CDD" id="cd09867">
    <property type="entry name" value="PIN_FEN1"/>
    <property type="match status" value="1"/>
</dbReference>
<dbReference type="FunFam" id="1.10.150.20:FF:000009">
    <property type="entry name" value="Flap endonuclease 1"/>
    <property type="match status" value="1"/>
</dbReference>
<dbReference type="FunFam" id="3.40.50.1010:FF:000016">
    <property type="entry name" value="Flap endonuclease 1"/>
    <property type="match status" value="1"/>
</dbReference>
<dbReference type="Gene3D" id="1.10.150.20">
    <property type="entry name" value="5' to 3' exonuclease, C-terminal subdomain"/>
    <property type="match status" value="1"/>
</dbReference>
<dbReference type="Gene3D" id="3.40.50.1010">
    <property type="entry name" value="5'-nuclease"/>
    <property type="match status" value="1"/>
</dbReference>
<dbReference type="HAMAP" id="MF_00614">
    <property type="entry name" value="Fen"/>
    <property type="match status" value="1"/>
</dbReference>
<dbReference type="InterPro" id="IPR002421">
    <property type="entry name" value="5-3_exonuclease"/>
</dbReference>
<dbReference type="InterPro" id="IPR036279">
    <property type="entry name" value="5-3_exonuclease_C_sf"/>
</dbReference>
<dbReference type="InterPro" id="IPR023426">
    <property type="entry name" value="Flap_endonuc"/>
</dbReference>
<dbReference type="InterPro" id="IPR008918">
    <property type="entry name" value="HhH2"/>
</dbReference>
<dbReference type="InterPro" id="IPR029060">
    <property type="entry name" value="PIN-like_dom_sf"/>
</dbReference>
<dbReference type="InterPro" id="IPR006086">
    <property type="entry name" value="XPG-I_dom"/>
</dbReference>
<dbReference type="InterPro" id="IPR006084">
    <property type="entry name" value="XPG/Rad2"/>
</dbReference>
<dbReference type="InterPro" id="IPR019974">
    <property type="entry name" value="XPG_CS"/>
</dbReference>
<dbReference type="InterPro" id="IPR006085">
    <property type="entry name" value="XPG_DNA_repair_N"/>
</dbReference>
<dbReference type="PANTHER" id="PTHR11081:SF9">
    <property type="entry name" value="FLAP ENDONUCLEASE 1"/>
    <property type="match status" value="1"/>
</dbReference>
<dbReference type="PANTHER" id="PTHR11081">
    <property type="entry name" value="FLAP ENDONUCLEASE FAMILY MEMBER"/>
    <property type="match status" value="1"/>
</dbReference>
<dbReference type="Pfam" id="PF00867">
    <property type="entry name" value="XPG_I"/>
    <property type="match status" value="1"/>
</dbReference>
<dbReference type="Pfam" id="PF00752">
    <property type="entry name" value="XPG_N"/>
    <property type="match status" value="1"/>
</dbReference>
<dbReference type="PRINTS" id="PR00853">
    <property type="entry name" value="XPGRADSUPER"/>
</dbReference>
<dbReference type="SMART" id="SM00475">
    <property type="entry name" value="53EXOc"/>
    <property type="match status" value="1"/>
</dbReference>
<dbReference type="SMART" id="SM00279">
    <property type="entry name" value="HhH2"/>
    <property type="match status" value="1"/>
</dbReference>
<dbReference type="SMART" id="SM00484">
    <property type="entry name" value="XPGI"/>
    <property type="match status" value="1"/>
</dbReference>
<dbReference type="SMART" id="SM00485">
    <property type="entry name" value="XPGN"/>
    <property type="match status" value="1"/>
</dbReference>
<dbReference type="SUPFAM" id="SSF47807">
    <property type="entry name" value="5' to 3' exonuclease, C-terminal subdomain"/>
    <property type="match status" value="1"/>
</dbReference>
<dbReference type="SUPFAM" id="SSF88723">
    <property type="entry name" value="PIN domain-like"/>
    <property type="match status" value="1"/>
</dbReference>
<dbReference type="PROSITE" id="PS00841">
    <property type="entry name" value="XPG_1"/>
    <property type="match status" value="1"/>
</dbReference>
<organism>
    <name type="scientific">Entamoeba dispar (strain ATCC PRA-260 / SAW760)</name>
    <dbReference type="NCBI Taxonomy" id="370354"/>
    <lineage>
        <taxon>Eukaryota</taxon>
        <taxon>Amoebozoa</taxon>
        <taxon>Evosea</taxon>
        <taxon>Archamoebae</taxon>
        <taxon>Mastigamoebida</taxon>
        <taxon>Entamoebidae</taxon>
        <taxon>Entamoeba</taxon>
    </lineage>
</organism>
<reference key="1">
    <citation type="submission" date="2007-12" db="EMBL/GenBank/DDBJ databases">
        <title>Annotation of Entamoeba dispar SAW760.</title>
        <authorList>
            <person name="Lorenzi H."/>
            <person name="Inman J."/>
            <person name="Schobel S."/>
            <person name="Amedeo P."/>
            <person name="Caler E."/>
        </authorList>
    </citation>
    <scope>NUCLEOTIDE SEQUENCE [LARGE SCALE GENOMIC DNA]</scope>
    <source>
        <strain>ATCC PRA-260 / SAW760</strain>
    </source>
</reference>
<gene>
    <name evidence="1" type="primary">FEN1</name>
    <name type="ORF">EDI_115410</name>
</gene>
<feature type="chain" id="PRO_0000403516" description="Flap endonuclease 1">
    <location>
        <begin position="1"/>
        <end position="376"/>
    </location>
</feature>
<feature type="region of interest" description="N-domain">
    <location>
        <begin position="1"/>
        <end position="105"/>
    </location>
</feature>
<feature type="region of interest" description="I-domain">
    <location>
        <begin position="123"/>
        <end position="254"/>
    </location>
</feature>
<feature type="region of interest" description="Interaction with PCNA" evidence="1">
    <location>
        <begin position="336"/>
        <end position="344"/>
    </location>
</feature>
<feature type="region of interest" description="Disordered" evidence="2">
    <location>
        <begin position="352"/>
        <end position="376"/>
    </location>
</feature>
<feature type="compositionally biased region" description="Basic residues" evidence="2">
    <location>
        <begin position="360"/>
        <end position="376"/>
    </location>
</feature>
<feature type="binding site" evidence="1">
    <location>
        <position position="34"/>
    </location>
    <ligand>
        <name>Mg(2+)</name>
        <dbReference type="ChEBI" id="CHEBI:18420"/>
        <label>1</label>
    </ligand>
</feature>
<feature type="binding site" evidence="1">
    <location>
        <position position="47"/>
    </location>
    <ligand>
        <name>DNA</name>
        <dbReference type="ChEBI" id="CHEBI:16991"/>
    </ligand>
</feature>
<feature type="binding site" evidence="1">
    <location>
        <position position="71"/>
    </location>
    <ligand>
        <name>DNA</name>
        <dbReference type="ChEBI" id="CHEBI:16991"/>
    </ligand>
</feature>
<feature type="binding site" evidence="1">
    <location>
        <position position="87"/>
    </location>
    <ligand>
        <name>Mg(2+)</name>
        <dbReference type="ChEBI" id="CHEBI:18420"/>
        <label>1</label>
    </ligand>
</feature>
<feature type="binding site" evidence="1">
    <location>
        <position position="159"/>
    </location>
    <ligand>
        <name>DNA</name>
        <dbReference type="ChEBI" id="CHEBI:16991"/>
    </ligand>
</feature>
<feature type="binding site" evidence="1">
    <location>
        <position position="159"/>
    </location>
    <ligand>
        <name>Mg(2+)</name>
        <dbReference type="ChEBI" id="CHEBI:18420"/>
        <label>1</label>
    </ligand>
</feature>
<feature type="binding site" evidence="1">
    <location>
        <position position="161"/>
    </location>
    <ligand>
        <name>Mg(2+)</name>
        <dbReference type="ChEBI" id="CHEBI:18420"/>
        <label>1</label>
    </ligand>
</feature>
<feature type="binding site" evidence="1">
    <location>
        <position position="180"/>
    </location>
    <ligand>
        <name>Mg(2+)</name>
        <dbReference type="ChEBI" id="CHEBI:18420"/>
        <label>2</label>
    </ligand>
</feature>
<feature type="binding site" evidence="1">
    <location>
        <position position="182"/>
    </location>
    <ligand>
        <name>Mg(2+)</name>
        <dbReference type="ChEBI" id="CHEBI:18420"/>
        <label>2</label>
    </ligand>
</feature>
<feature type="binding site" evidence="1">
    <location>
        <position position="232"/>
    </location>
    <ligand>
        <name>DNA</name>
        <dbReference type="ChEBI" id="CHEBI:16991"/>
    </ligand>
</feature>
<feature type="binding site" evidence="1">
    <location>
        <position position="234"/>
    </location>
    <ligand>
        <name>DNA</name>
        <dbReference type="ChEBI" id="CHEBI:16991"/>
    </ligand>
</feature>
<feature type="binding site" evidence="1">
    <location>
        <position position="234"/>
    </location>
    <ligand>
        <name>Mg(2+)</name>
        <dbReference type="ChEBI" id="CHEBI:18420"/>
        <label>2</label>
    </ligand>
</feature>
<name>FEN1_ENTDS</name>
<comment type="function">
    <text evidence="1">Structure-specific nuclease with 5'-flap endonuclease and 5'-3' exonuclease activities involved in DNA replication and repair. During DNA replication, cleaves the 5'-overhanging flap structure that is generated by displacement synthesis when DNA polymerase encounters the 5'-end of a downstream Okazaki fragment. It enters the flap from the 5'-end and then tracks to cleave the flap base, leaving a nick for ligation. Also involved in the long patch base excision repair (LP-BER) pathway, by cleaving within the apurinic/apyrimidinic (AP) site-terminated flap. Acts as a genome stabilization factor that prevents flaps from equilibrating into structures that lead to duplications and deletions. Also possesses 5'-3' exonuclease activity on nicked or gapped double-stranded DNA, and exhibits RNase H activity. Also involved in replication and repair of rDNA and in repairing mitochondrial DNA.</text>
</comment>
<comment type="cofactor">
    <cofactor evidence="1">
        <name>Mg(2+)</name>
        <dbReference type="ChEBI" id="CHEBI:18420"/>
    </cofactor>
    <text evidence="1">Binds 2 magnesium ions per subunit. They probably participate in the reaction catalyzed by the enzyme. May bind an additional third magnesium ion after substrate binding.</text>
</comment>
<comment type="subunit">
    <text evidence="1">Interacts with PCNA. Three molecules of FEN1 bind to one PCNA trimer with each molecule binding to one PCNA monomer. PCNA stimulates the nuclease activity without altering cleavage specificity.</text>
</comment>
<comment type="subcellular location">
    <subcellularLocation>
        <location evidence="1">Nucleus</location>
        <location evidence="1">Nucleolus</location>
    </subcellularLocation>
    <subcellularLocation>
        <location evidence="1">Nucleus</location>
        <location evidence="1">Nucleoplasm</location>
    </subcellularLocation>
    <subcellularLocation>
        <location evidence="1">Mitochondrion</location>
    </subcellularLocation>
    <text evidence="1">Resides mostly in the nucleoli and relocalizes to the nucleoplasm upon DNA damage.</text>
</comment>
<comment type="PTM">
    <text evidence="1">Phosphorylated. Phosphorylation upon DNA damage induces relocalization to the nuclear plasma.</text>
</comment>
<comment type="similarity">
    <text evidence="1">Belongs to the XPG/RAD2 endonuclease family. FEN1 subfamily.</text>
</comment>
<evidence type="ECO:0000255" key="1">
    <source>
        <dbReference type="HAMAP-Rule" id="MF_03140"/>
    </source>
</evidence>
<evidence type="ECO:0000256" key="2">
    <source>
        <dbReference type="SAM" id="MobiDB-lite"/>
    </source>
</evidence>
<proteinExistence type="inferred from homology"/>
<protein>
    <recommendedName>
        <fullName evidence="1">Flap endonuclease 1</fullName>
        <shortName evidence="1">FEN-1</shortName>
        <ecNumber evidence="1">3.1.-.-</ecNumber>
    </recommendedName>
    <alternativeName>
        <fullName evidence="1">Flap structure-specific endonuclease 1</fullName>
    </alternativeName>
</protein>